<keyword id="KW-0204">Cytolysis</keyword>
<keyword id="KW-1015">Disulfide bond</keyword>
<keyword id="KW-0354">Hemolysis</keyword>
<keyword id="KW-1032">Host cell membrane</keyword>
<keyword id="KW-1043">Host membrane</keyword>
<keyword id="KW-0472">Membrane</keyword>
<keyword id="KW-0964">Secreted</keyword>
<keyword id="KW-0732">Signal</keyword>
<keyword id="KW-0800">Toxin</keyword>
<keyword id="KW-0843">Virulence</keyword>
<protein>
    <recommendedName>
        <fullName>Aerolysin-5</fullName>
    </recommendedName>
    <alternativeName>
        <fullName>Hemolysin-5</fullName>
    </alternativeName>
</protein>
<proteinExistence type="inferred from homology"/>
<gene>
    <name type="primary">ahh5</name>
</gene>
<evidence type="ECO:0000250" key="1"/>
<evidence type="ECO:0000255" key="2"/>
<evidence type="ECO:0000269" key="3">
    <source>
    </source>
</evidence>
<evidence type="ECO:0000305" key="4"/>
<dbReference type="EMBL" id="X65045">
    <property type="protein sequence ID" value="CAA46181.1"/>
    <property type="molecule type" value="Genomic_DNA"/>
</dbReference>
<dbReference type="PIR" id="I39592">
    <property type="entry name" value="S26575"/>
</dbReference>
<dbReference type="SMR" id="Q06306"/>
<dbReference type="GO" id="GO:0005576">
    <property type="term" value="C:extracellular region"/>
    <property type="evidence" value="ECO:0007669"/>
    <property type="project" value="UniProtKB-SubCell"/>
</dbReference>
<dbReference type="GO" id="GO:0020002">
    <property type="term" value="C:host cell plasma membrane"/>
    <property type="evidence" value="ECO:0007669"/>
    <property type="project" value="UniProtKB-SubCell"/>
</dbReference>
<dbReference type="GO" id="GO:0016020">
    <property type="term" value="C:membrane"/>
    <property type="evidence" value="ECO:0007669"/>
    <property type="project" value="UniProtKB-KW"/>
</dbReference>
<dbReference type="GO" id="GO:0090729">
    <property type="term" value="F:toxin activity"/>
    <property type="evidence" value="ECO:0007669"/>
    <property type="project" value="UniProtKB-KW"/>
</dbReference>
<dbReference type="GO" id="GO:0031640">
    <property type="term" value="P:killing of cells of another organism"/>
    <property type="evidence" value="ECO:0007669"/>
    <property type="project" value="UniProtKB-KW"/>
</dbReference>
<dbReference type="CDD" id="cd20218">
    <property type="entry name" value="PFM_aerolysin"/>
    <property type="match status" value="1"/>
</dbReference>
<dbReference type="Gene3D" id="3.10.40.10">
    <property type="entry name" value="Aerolysin/Pertussis toxin (APT), N-terminal domain"/>
    <property type="match status" value="1"/>
</dbReference>
<dbReference type="Gene3D" id="3.30.412.10">
    <property type="entry name" value="Proaerolysin, chain A, domain 2"/>
    <property type="match status" value="1"/>
</dbReference>
<dbReference type="Gene3D" id="2.170.15.10">
    <property type="entry name" value="Proaerolysin, chain A, domain 3"/>
    <property type="match status" value="1"/>
</dbReference>
<dbReference type="InterPro" id="IPR055267">
    <property type="entry name" value="Aerolysin-like_C"/>
</dbReference>
<dbReference type="InterPro" id="IPR005831">
    <property type="entry name" value="Aerolysin/haemolysin_CS"/>
</dbReference>
<dbReference type="InterPro" id="IPR005830">
    <property type="entry name" value="Aerolysn"/>
</dbReference>
<dbReference type="InterPro" id="IPR005138">
    <property type="entry name" value="APT_dom"/>
</dbReference>
<dbReference type="InterPro" id="IPR037015">
    <property type="entry name" value="APT_N_sf"/>
</dbReference>
<dbReference type="InterPro" id="IPR016187">
    <property type="entry name" value="CTDL_fold"/>
</dbReference>
<dbReference type="Pfam" id="PF01117">
    <property type="entry name" value="Aerolysin"/>
    <property type="match status" value="1"/>
</dbReference>
<dbReference type="Pfam" id="PF03440">
    <property type="entry name" value="APT"/>
    <property type="match status" value="1"/>
</dbReference>
<dbReference type="PRINTS" id="PR00754">
    <property type="entry name" value="AEROLYSIN"/>
</dbReference>
<dbReference type="SMART" id="SM00999">
    <property type="entry name" value="Aerolysin"/>
    <property type="match status" value="1"/>
</dbReference>
<dbReference type="SUPFAM" id="SSF56973">
    <property type="entry name" value="Aerolisin/ETX pore-forming domain"/>
    <property type="match status" value="1"/>
</dbReference>
<dbReference type="SUPFAM" id="SSF56436">
    <property type="entry name" value="C-type lectin-like"/>
    <property type="match status" value="1"/>
</dbReference>
<dbReference type="PROSITE" id="PS00274">
    <property type="entry name" value="AEROLYSIN"/>
    <property type="match status" value="1"/>
</dbReference>
<accession>Q06306</accession>
<comment type="function">
    <text evidence="3">Secreted, cytolytic toxin that forms pores in host membranes after proteolytic removal of a C-terminal propeptide, leading to destruction of the membrane permeability barrier and cell death. The pores are formed by transmembrane beta-strands and are approximately 3 nm in diameter.</text>
</comment>
<comment type="subunit">
    <text evidence="1">Homodimer in solution; homoheptamer in the host membrane. After binding to GPI-anchored proteins in target membranes and proteolytic removal of the C-terminal propeptide, the protein assembles into a heptameric pre-pore complex. A further conformation change leads to insertion into the host membrane (By similarity).</text>
</comment>
<comment type="subcellular location">
    <subcellularLocation>
        <location evidence="3">Secreted</location>
    </subcellularLocation>
    <subcellularLocation>
        <location evidence="3">Host cell membrane</location>
    </subcellularLocation>
    <text>Secreted as a soluble precursor.</text>
</comment>
<comment type="domain">
    <text evidence="1">The C-terminal propeptide is required for normal protein folding and secretion; it maintains the aerolysin precursor in its soluble form and prevents premature heptamerization and pore formation.</text>
</comment>
<comment type="PTM">
    <text evidence="1">Proteolytic cleavage and subsequent release of the propeptide trigger a major conformation change, leading to the formation of a heptameric pre-pore that then inserts into the host membrane.</text>
</comment>
<comment type="similarity">
    <text evidence="4">Belongs to the aerolysin family.</text>
</comment>
<sequence>MQKLKITGLSLIISGLLMAQRHAAEPVYPDQLRLFSLGQEVCGDKYRPITREEAQSVKSNIVNMMGQWQISGLANGWVIMGPVYNGEIKPGSASNTWCYPVNPVTGEIPTLSALDIPDGDEVDVQWRLVHDSANFIKPTSYLAHYLGYAWVGGNHSQYVGEDMDVTRDGDGWVIRGNNDGGCEGYRCGEKTAIKVSNFAYNLDPDSFKHGDVTQSDRQLVKTVVGWAINDSYTPQSAYDVTLRYDTATNWSKTNTYGLSEKVTTKNKFKWPLVGETELSIEIAANQSWASQNGGSTTTSLSQSVRPTVPARSKIPVKIELYKADISYPYEFKADVSYDLTLSGFLRWGGNAWYTHPDNRPNWNHTFVIGPYKDKASSIRYQWDKRYIPGEVKWWDWNWTIQQNGLSTMQNNLARVLRPVRAGITGDFSAESQFAGNIEIGAPVPLAADGKAPRALSARRGEQGLRLAIPLECRKSSPGLASATSA</sequence>
<feature type="signal peptide" evidence="2">
    <location>
        <begin position="1"/>
        <end position="23"/>
    </location>
</feature>
<feature type="chain" id="PRO_0000035626" description="Aerolysin-5">
    <location>
        <begin position="24"/>
        <end position="445"/>
    </location>
</feature>
<feature type="propeptide" id="PRO_0000035627" evidence="2">
    <location>
        <begin position="446"/>
        <end position="485"/>
    </location>
</feature>
<feature type="region of interest" description="Interaction with host N-linked glycan" evidence="1">
    <location>
        <begin position="68"/>
        <end position="84"/>
    </location>
</feature>
<feature type="region of interest" description="Part of the transmembrane beta-barrel after proteolytic activation of the toxin and insertion into the host membrane" evidence="1">
    <location>
        <begin position="256"/>
        <end position="288"/>
    </location>
</feature>
<feature type="region of interest" description="Interaction with glycans from host GPI-anchor" evidence="1">
    <location>
        <begin position="346"/>
        <end position="355"/>
    </location>
</feature>
<feature type="site" description="Important for oligomerization" evidence="1">
    <location>
        <position position="155"/>
    </location>
</feature>
<feature type="site" description="Important for heptamerization" evidence="1">
    <location>
        <position position="374"/>
    </location>
</feature>
<feature type="site" description="Important for heptamerization" evidence="1">
    <location>
        <position position="390"/>
    </location>
</feature>
<feature type="disulfide bond" evidence="1">
    <location>
        <begin position="42"/>
        <end position="98"/>
    </location>
</feature>
<feature type="disulfide bond" evidence="1">
    <location>
        <begin position="182"/>
        <end position="187"/>
    </location>
</feature>
<name>AER5_AERHY</name>
<organism>
    <name type="scientific">Aeromonas hydrophila</name>
    <dbReference type="NCBI Taxonomy" id="644"/>
    <lineage>
        <taxon>Bacteria</taxon>
        <taxon>Pseudomonadati</taxon>
        <taxon>Pseudomonadota</taxon>
        <taxon>Gammaproteobacteria</taxon>
        <taxon>Aeromonadales</taxon>
        <taxon>Aeromonadaceae</taxon>
        <taxon>Aeromonas</taxon>
    </lineage>
</organism>
<reference key="1">
    <citation type="journal article" date="1992" name="Microb. Pathog.">
        <title>Nucleotide sequences and characterization of haemolysin genes from Aeromonas hydrophila and Aeromonas sobria.</title>
        <authorList>
            <person name="Hirono I."/>
            <person name="Aoki T."/>
            <person name="Asao T."/>
            <person name="Kozaki S."/>
        </authorList>
    </citation>
    <scope>NUCLEOTIDE SEQUENCE [GENOMIC DNA]</scope>
    <scope>FUNCTION</scope>
    <scope>SUBCELLULAR LOCATION</scope>
    <source>
        <strain>Ah1</strain>
    </source>
</reference>